<evidence type="ECO:0000250" key="1"/>
<evidence type="ECO:0000255" key="2"/>
<evidence type="ECO:0000305" key="3"/>
<gene>
    <name type="ordered locus">BRA1090</name>
    <name type="ordered locus">BS1330_II1082</name>
</gene>
<comment type="function">
    <text evidence="1">Probably part of an ABC transporter complex that could be involved in peptide import.</text>
</comment>
<comment type="subunit">
    <text evidence="3">The complex is composed of two ATP-binding proteins (BRA1094), two transmembrane proteins (BRA1092 and BRA1093) and a solute-binding protein (BRA1090).</text>
</comment>
<comment type="subcellular location">
    <subcellularLocation>
        <location evidence="3">Periplasm</location>
    </subcellularLocation>
</comment>
<comment type="similarity">
    <text evidence="3">Belongs to the bacterial solute-binding protein 5 family.</text>
</comment>
<sequence>MTIRTLFNAILLSTTLLAAPSLAETPKEGGTLVYASNAGPGTLDPHMGNSLVELEIAHQIYEGLVTIDANYNTATMLAESYVLSEDSKTLTFKLRKGVKFHDGSDMKSDDVLASFERYAKVSPNAKVLDIVDHYETPDDYTFVIHLKEVNAAFLDTLKSPVYPFSIIPAEQKDKPARELDIIGTGPFKLGEWKRDSHLYLEKFADYVADKGKPASGYAGEKKVYVDKVRVNFLSETNSRVAAIQTGEAQVTTQLTADATKKLQNAPGVKPLEIIPFCQQYLIVNTQQAPTNNSAIRKALRTAVNAEDILVVSGEAATMDPSMSYPGGAYYSKENAEPYYNQNNPDEAAKMLADAGYKGEELVLLTNSNYDYMRDSIVLLAEQLQAAGFKARVEMTDWATNSTAMQTGSGKWNVSTTSFCSNPLLGPQQWQSVVYLFPQVKSDALMDTAYKKFFTSLKLEDRRAAWLDIEKHILDEAYMIKISNRASGRAYRPDDIGGYPEYYMNFFWNVWLKKQ</sequence>
<dbReference type="EMBL" id="AE014292">
    <property type="protein sequence ID" value="AAN34255.1"/>
    <property type="molecule type" value="Genomic_DNA"/>
</dbReference>
<dbReference type="EMBL" id="CP002998">
    <property type="protein sequence ID" value="AEM20532.1"/>
    <property type="molecule type" value="Genomic_DNA"/>
</dbReference>
<dbReference type="RefSeq" id="WP_004690422.1">
    <property type="nucleotide sequence ID" value="NZ_KN046805.1"/>
</dbReference>
<dbReference type="SMR" id="Q8FUX2"/>
<dbReference type="KEGG" id="bms:BRA1090"/>
<dbReference type="KEGG" id="bsi:BS1330_II1082"/>
<dbReference type="PATRIC" id="fig|204722.21.peg.2009"/>
<dbReference type="HOGENOM" id="CLU_017028_7_1_5"/>
<dbReference type="PhylomeDB" id="Q8FUX2"/>
<dbReference type="Proteomes" id="UP000007104">
    <property type="component" value="Chromosome II"/>
</dbReference>
<dbReference type="GO" id="GO:0043190">
    <property type="term" value="C:ATP-binding cassette (ABC) transporter complex"/>
    <property type="evidence" value="ECO:0007669"/>
    <property type="project" value="InterPro"/>
</dbReference>
<dbReference type="GO" id="GO:0030288">
    <property type="term" value="C:outer membrane-bounded periplasmic space"/>
    <property type="evidence" value="ECO:0007669"/>
    <property type="project" value="UniProtKB-ARBA"/>
</dbReference>
<dbReference type="GO" id="GO:1904680">
    <property type="term" value="F:peptide transmembrane transporter activity"/>
    <property type="evidence" value="ECO:0007669"/>
    <property type="project" value="TreeGrafter"/>
</dbReference>
<dbReference type="GO" id="GO:0015833">
    <property type="term" value="P:peptide transport"/>
    <property type="evidence" value="ECO:0007669"/>
    <property type="project" value="TreeGrafter"/>
</dbReference>
<dbReference type="CDD" id="cd08502">
    <property type="entry name" value="PBP2_NikA_DppA_OppA_like_16"/>
    <property type="match status" value="1"/>
</dbReference>
<dbReference type="Gene3D" id="3.10.105.10">
    <property type="entry name" value="Dipeptide-binding Protein, Domain 3"/>
    <property type="match status" value="1"/>
</dbReference>
<dbReference type="Gene3D" id="3.40.190.10">
    <property type="entry name" value="Periplasmic binding protein-like II"/>
    <property type="match status" value="1"/>
</dbReference>
<dbReference type="InterPro" id="IPR030678">
    <property type="entry name" value="Peptide/Ni-bd"/>
</dbReference>
<dbReference type="InterPro" id="IPR039424">
    <property type="entry name" value="SBP_5"/>
</dbReference>
<dbReference type="InterPro" id="IPR023765">
    <property type="entry name" value="SBP_5_CS"/>
</dbReference>
<dbReference type="InterPro" id="IPR000914">
    <property type="entry name" value="SBP_5_dom"/>
</dbReference>
<dbReference type="PANTHER" id="PTHR30290:SF38">
    <property type="entry name" value="D,D-DIPEPTIDE-BINDING PERIPLASMIC PROTEIN DDPA-RELATED"/>
    <property type="match status" value="1"/>
</dbReference>
<dbReference type="PANTHER" id="PTHR30290">
    <property type="entry name" value="PERIPLASMIC BINDING COMPONENT OF ABC TRANSPORTER"/>
    <property type="match status" value="1"/>
</dbReference>
<dbReference type="Pfam" id="PF00496">
    <property type="entry name" value="SBP_bac_5"/>
    <property type="match status" value="1"/>
</dbReference>
<dbReference type="PIRSF" id="PIRSF002741">
    <property type="entry name" value="MppA"/>
    <property type="match status" value="1"/>
</dbReference>
<dbReference type="SUPFAM" id="SSF53850">
    <property type="entry name" value="Periplasmic binding protein-like II"/>
    <property type="match status" value="1"/>
</dbReference>
<dbReference type="PROSITE" id="PS01040">
    <property type="entry name" value="SBP_BACTERIAL_5"/>
    <property type="match status" value="1"/>
</dbReference>
<keyword id="KW-0574">Periplasm</keyword>
<keyword id="KW-0732">Signal</keyword>
<keyword id="KW-0813">Transport</keyword>
<accession>Q8FUX2</accession>
<accession>G0KE94</accession>
<organism>
    <name type="scientific">Brucella suis biovar 1 (strain 1330)</name>
    <dbReference type="NCBI Taxonomy" id="204722"/>
    <lineage>
        <taxon>Bacteria</taxon>
        <taxon>Pseudomonadati</taxon>
        <taxon>Pseudomonadota</taxon>
        <taxon>Alphaproteobacteria</taxon>
        <taxon>Hyphomicrobiales</taxon>
        <taxon>Brucellaceae</taxon>
        <taxon>Brucella/Ochrobactrum group</taxon>
        <taxon>Brucella</taxon>
    </lineage>
</organism>
<feature type="signal peptide" evidence="2">
    <location>
        <begin position="1"/>
        <end position="23"/>
    </location>
</feature>
<feature type="chain" id="PRO_0000290145" description="Putative peptide-binding periplasmic protein BRA1090/BS1330_II1082">
    <location>
        <begin position="24"/>
        <end position="514"/>
    </location>
</feature>
<name>Y1090_BRUSU</name>
<protein>
    <recommendedName>
        <fullName>Putative peptide-binding periplasmic protein BRA1090/BS1330_II1082</fullName>
    </recommendedName>
</protein>
<proteinExistence type="inferred from homology"/>
<reference key="1">
    <citation type="journal article" date="2002" name="Proc. Natl. Acad. Sci. U.S.A.">
        <title>The Brucella suis genome reveals fundamental similarities between animal and plant pathogens and symbionts.</title>
        <authorList>
            <person name="Paulsen I.T."/>
            <person name="Seshadri R."/>
            <person name="Nelson K.E."/>
            <person name="Eisen J.A."/>
            <person name="Heidelberg J.F."/>
            <person name="Read T.D."/>
            <person name="Dodson R.J."/>
            <person name="Umayam L.A."/>
            <person name="Brinkac L.M."/>
            <person name="Beanan M.J."/>
            <person name="Daugherty S.C."/>
            <person name="DeBoy R.T."/>
            <person name="Durkin A.S."/>
            <person name="Kolonay J.F."/>
            <person name="Madupu R."/>
            <person name="Nelson W.C."/>
            <person name="Ayodeji B."/>
            <person name="Kraul M."/>
            <person name="Shetty J."/>
            <person name="Malek J.A."/>
            <person name="Van Aken S.E."/>
            <person name="Riedmuller S."/>
            <person name="Tettelin H."/>
            <person name="Gill S.R."/>
            <person name="White O."/>
            <person name="Salzberg S.L."/>
            <person name="Hoover D.L."/>
            <person name="Lindler L.E."/>
            <person name="Halling S.M."/>
            <person name="Boyle S.M."/>
            <person name="Fraser C.M."/>
        </authorList>
    </citation>
    <scope>NUCLEOTIDE SEQUENCE [LARGE SCALE GENOMIC DNA]</scope>
    <source>
        <strain>1330</strain>
    </source>
</reference>
<reference key="2">
    <citation type="journal article" date="2011" name="J. Bacteriol.">
        <title>Revised genome sequence of Brucella suis 1330.</title>
        <authorList>
            <person name="Tae H."/>
            <person name="Shallom S."/>
            <person name="Settlage R."/>
            <person name="Preston D."/>
            <person name="Adams L.G."/>
            <person name="Garner H.R."/>
        </authorList>
    </citation>
    <scope>NUCLEOTIDE SEQUENCE [LARGE SCALE GENOMIC DNA]</scope>
    <source>
        <strain>1330</strain>
    </source>
</reference>